<sequence>MSMVETAPSKIQVRNLNFYYGKFHALKNINLDIAKNQVTAFIGPSGCGKSTLLRTFNKMFELYPEQRAEGEILLDGDNILTNSQDIALLRAKVGMVFQKPTPFPMSIYDNIAFGVRLFEKLSRADMDERVQWALTKAALWNETKDKLHQSGYSLSGGQQQRLCIARGIAIRPEVLLLDEPCSALDPISTGRIEELITELKQDYTVVIVTHNMQQAARCSDHTAFMYLGELIEFSNTDDLFTKPAKKQTEDYITGRYG</sequence>
<dbReference type="EC" id="7.3.2.1" evidence="2"/>
<dbReference type="EMBL" id="AE005674">
    <property type="protein sequence ID" value="AAN45176.1"/>
    <property type="molecule type" value="Genomic_DNA"/>
</dbReference>
<dbReference type="EMBL" id="AE014073">
    <property type="protein sequence ID" value="AAP19022.1"/>
    <property type="molecule type" value="Genomic_DNA"/>
</dbReference>
<dbReference type="RefSeq" id="NP_709469.1">
    <property type="nucleotide sequence ID" value="NC_004337.2"/>
</dbReference>
<dbReference type="RefSeq" id="WP_000063125.1">
    <property type="nucleotide sequence ID" value="NZ_WPGW01000131.1"/>
</dbReference>
<dbReference type="SMR" id="P0AAH3"/>
<dbReference type="STRING" id="198214.SF3730"/>
<dbReference type="PaxDb" id="198214-SF3730"/>
<dbReference type="GeneID" id="1026897"/>
<dbReference type="GeneID" id="93778212"/>
<dbReference type="KEGG" id="sfl:SF3730"/>
<dbReference type="KEGG" id="sfx:S4042"/>
<dbReference type="PATRIC" id="fig|198214.7.peg.4403"/>
<dbReference type="HOGENOM" id="CLU_000604_1_22_6"/>
<dbReference type="Proteomes" id="UP000001006">
    <property type="component" value="Chromosome"/>
</dbReference>
<dbReference type="Proteomes" id="UP000002673">
    <property type="component" value="Chromosome"/>
</dbReference>
<dbReference type="GO" id="GO:0005886">
    <property type="term" value="C:plasma membrane"/>
    <property type="evidence" value="ECO:0007669"/>
    <property type="project" value="UniProtKB-SubCell"/>
</dbReference>
<dbReference type="GO" id="GO:0005524">
    <property type="term" value="F:ATP binding"/>
    <property type="evidence" value="ECO:0007669"/>
    <property type="project" value="UniProtKB-KW"/>
</dbReference>
<dbReference type="GO" id="GO:0016887">
    <property type="term" value="F:ATP hydrolysis activity"/>
    <property type="evidence" value="ECO:0007669"/>
    <property type="project" value="InterPro"/>
</dbReference>
<dbReference type="GO" id="GO:0015415">
    <property type="term" value="F:ATPase-coupled phosphate ion transmembrane transporter activity"/>
    <property type="evidence" value="ECO:0007669"/>
    <property type="project" value="UniProtKB-EC"/>
</dbReference>
<dbReference type="GO" id="GO:0035435">
    <property type="term" value="P:phosphate ion transmembrane transport"/>
    <property type="evidence" value="ECO:0007669"/>
    <property type="project" value="InterPro"/>
</dbReference>
<dbReference type="CDD" id="cd03260">
    <property type="entry name" value="ABC_PstB_phosphate_transporter"/>
    <property type="match status" value="1"/>
</dbReference>
<dbReference type="FunFam" id="3.40.50.300:FF:000132">
    <property type="entry name" value="Phosphate import ATP-binding protein PstB"/>
    <property type="match status" value="1"/>
</dbReference>
<dbReference type="Gene3D" id="3.40.50.300">
    <property type="entry name" value="P-loop containing nucleotide triphosphate hydrolases"/>
    <property type="match status" value="1"/>
</dbReference>
<dbReference type="InterPro" id="IPR003593">
    <property type="entry name" value="AAA+_ATPase"/>
</dbReference>
<dbReference type="InterPro" id="IPR003439">
    <property type="entry name" value="ABC_transporter-like_ATP-bd"/>
</dbReference>
<dbReference type="InterPro" id="IPR017871">
    <property type="entry name" value="ABC_transporter-like_CS"/>
</dbReference>
<dbReference type="InterPro" id="IPR027417">
    <property type="entry name" value="P-loop_NTPase"/>
</dbReference>
<dbReference type="InterPro" id="IPR005670">
    <property type="entry name" value="PstB-like"/>
</dbReference>
<dbReference type="NCBIfam" id="TIGR00972">
    <property type="entry name" value="3a0107s01c2"/>
    <property type="match status" value="1"/>
</dbReference>
<dbReference type="PANTHER" id="PTHR43423">
    <property type="entry name" value="ABC TRANSPORTER I FAMILY MEMBER 17"/>
    <property type="match status" value="1"/>
</dbReference>
<dbReference type="PANTHER" id="PTHR43423:SF3">
    <property type="entry name" value="PHOSPHATE IMPORT ATP-BINDING PROTEIN PSTB"/>
    <property type="match status" value="1"/>
</dbReference>
<dbReference type="Pfam" id="PF00005">
    <property type="entry name" value="ABC_tran"/>
    <property type="match status" value="1"/>
</dbReference>
<dbReference type="SMART" id="SM00382">
    <property type="entry name" value="AAA"/>
    <property type="match status" value="1"/>
</dbReference>
<dbReference type="SUPFAM" id="SSF52540">
    <property type="entry name" value="P-loop containing nucleoside triphosphate hydrolases"/>
    <property type="match status" value="1"/>
</dbReference>
<dbReference type="PROSITE" id="PS00211">
    <property type="entry name" value="ABC_TRANSPORTER_1"/>
    <property type="match status" value="1"/>
</dbReference>
<dbReference type="PROSITE" id="PS50893">
    <property type="entry name" value="ABC_TRANSPORTER_2"/>
    <property type="match status" value="1"/>
</dbReference>
<dbReference type="PROSITE" id="PS51238">
    <property type="entry name" value="PSTB"/>
    <property type="match status" value="1"/>
</dbReference>
<organism>
    <name type="scientific">Shigella flexneri</name>
    <dbReference type="NCBI Taxonomy" id="623"/>
    <lineage>
        <taxon>Bacteria</taxon>
        <taxon>Pseudomonadati</taxon>
        <taxon>Pseudomonadota</taxon>
        <taxon>Gammaproteobacteria</taxon>
        <taxon>Enterobacterales</taxon>
        <taxon>Enterobacteriaceae</taxon>
        <taxon>Shigella</taxon>
    </lineage>
</organism>
<accession>P0AAH3</accession>
<accession>P07655</accession>
<comment type="function">
    <text evidence="2">Part of the ABC transporter complex PstSACB involved in phosphate import. Responsible for energy coupling to the transport system.</text>
</comment>
<comment type="catalytic activity">
    <reaction evidence="2">
        <text>phosphate(out) + ATP + H2O = ADP + 2 phosphate(in) + H(+)</text>
        <dbReference type="Rhea" id="RHEA:24440"/>
        <dbReference type="ChEBI" id="CHEBI:15377"/>
        <dbReference type="ChEBI" id="CHEBI:15378"/>
        <dbReference type="ChEBI" id="CHEBI:30616"/>
        <dbReference type="ChEBI" id="CHEBI:43474"/>
        <dbReference type="ChEBI" id="CHEBI:456216"/>
        <dbReference type="EC" id="7.3.2.1"/>
    </reaction>
</comment>
<comment type="subunit">
    <text evidence="2">The complex is composed of two ATP-binding proteins (PstB), two transmembrane proteins (PstC and PstA) and a solute-binding protein (PstS).</text>
</comment>
<comment type="subcellular location">
    <subcellularLocation>
        <location evidence="2">Cell inner membrane</location>
        <topology evidence="2">Peripheral membrane protein</topology>
    </subcellularLocation>
</comment>
<comment type="similarity">
    <text evidence="2">Belongs to the ABC transporter superfamily. Phosphate importer (TC 3.A.1.7) family.</text>
</comment>
<feature type="initiator methionine" description="Removed" evidence="1">
    <location>
        <position position="1"/>
    </location>
</feature>
<feature type="chain" id="PRO_0000092876" description="Phosphate import ATP-binding protein PstB">
    <location>
        <begin position="2"/>
        <end position="257"/>
    </location>
</feature>
<feature type="domain" description="ABC transporter" evidence="2">
    <location>
        <begin position="11"/>
        <end position="252"/>
    </location>
</feature>
<feature type="binding site" evidence="2">
    <location>
        <begin position="43"/>
        <end position="50"/>
    </location>
    <ligand>
        <name>ATP</name>
        <dbReference type="ChEBI" id="CHEBI:30616"/>
    </ligand>
</feature>
<reference key="1">
    <citation type="journal article" date="2002" name="Nucleic Acids Res.">
        <title>Genome sequence of Shigella flexneri 2a: insights into pathogenicity through comparison with genomes of Escherichia coli K12 and O157.</title>
        <authorList>
            <person name="Jin Q."/>
            <person name="Yuan Z."/>
            <person name="Xu J."/>
            <person name="Wang Y."/>
            <person name="Shen Y."/>
            <person name="Lu W."/>
            <person name="Wang J."/>
            <person name="Liu H."/>
            <person name="Yang J."/>
            <person name="Yang F."/>
            <person name="Zhang X."/>
            <person name="Zhang J."/>
            <person name="Yang G."/>
            <person name="Wu H."/>
            <person name="Qu D."/>
            <person name="Dong J."/>
            <person name="Sun L."/>
            <person name="Xue Y."/>
            <person name="Zhao A."/>
            <person name="Gao Y."/>
            <person name="Zhu J."/>
            <person name="Kan B."/>
            <person name="Ding K."/>
            <person name="Chen S."/>
            <person name="Cheng H."/>
            <person name="Yao Z."/>
            <person name="He B."/>
            <person name="Chen R."/>
            <person name="Ma D."/>
            <person name="Qiang B."/>
            <person name="Wen Y."/>
            <person name="Hou Y."/>
            <person name="Yu J."/>
        </authorList>
    </citation>
    <scope>NUCLEOTIDE SEQUENCE [LARGE SCALE GENOMIC DNA]</scope>
    <source>
        <strain>301 / Serotype 2a</strain>
    </source>
</reference>
<reference key="2">
    <citation type="journal article" date="2003" name="Infect. Immun.">
        <title>Complete genome sequence and comparative genomics of Shigella flexneri serotype 2a strain 2457T.</title>
        <authorList>
            <person name="Wei J."/>
            <person name="Goldberg M.B."/>
            <person name="Burland V."/>
            <person name="Venkatesan M.M."/>
            <person name="Deng W."/>
            <person name="Fournier G."/>
            <person name="Mayhew G.F."/>
            <person name="Plunkett G. III"/>
            <person name="Rose D.J."/>
            <person name="Darling A."/>
            <person name="Mau B."/>
            <person name="Perna N.T."/>
            <person name="Payne S.M."/>
            <person name="Runyen-Janecky L.J."/>
            <person name="Zhou S."/>
            <person name="Schwartz D.C."/>
            <person name="Blattner F.R."/>
        </authorList>
    </citation>
    <scope>NUCLEOTIDE SEQUENCE [LARGE SCALE GENOMIC DNA]</scope>
    <source>
        <strain>ATCC 700930 / 2457T / Serotype 2a</strain>
    </source>
</reference>
<protein>
    <recommendedName>
        <fullName evidence="2">Phosphate import ATP-binding protein PstB</fullName>
        <ecNumber evidence="2">7.3.2.1</ecNumber>
    </recommendedName>
    <alternativeName>
        <fullName evidence="2">ABC phosphate transporter</fullName>
    </alternativeName>
    <alternativeName>
        <fullName evidence="2">Phosphate-transporting ATPase</fullName>
    </alternativeName>
</protein>
<proteinExistence type="inferred from homology"/>
<name>PSTB_SHIFL</name>
<evidence type="ECO:0000250" key="1"/>
<evidence type="ECO:0000255" key="2">
    <source>
        <dbReference type="HAMAP-Rule" id="MF_01702"/>
    </source>
</evidence>
<keyword id="KW-0067">ATP-binding</keyword>
<keyword id="KW-0997">Cell inner membrane</keyword>
<keyword id="KW-1003">Cell membrane</keyword>
<keyword id="KW-0472">Membrane</keyword>
<keyword id="KW-0547">Nucleotide-binding</keyword>
<keyword id="KW-0592">Phosphate transport</keyword>
<keyword id="KW-1185">Reference proteome</keyword>
<keyword id="KW-1278">Translocase</keyword>
<keyword id="KW-0813">Transport</keyword>
<gene>
    <name evidence="2" type="primary">pstB</name>
    <name type="ordered locus">SF3730</name>
    <name type="ordered locus">S4042</name>
</gene>